<reference key="1">
    <citation type="journal article" date="2000" name="DNA Res.">
        <title>Structural analysis of Arabidopsis thaliana chromosome 5. X. Sequence features of the regions of 3,076,755 bp covered by sixty P1 and TAC clones.</title>
        <authorList>
            <person name="Sato S."/>
            <person name="Nakamura Y."/>
            <person name="Kaneko T."/>
            <person name="Katoh T."/>
            <person name="Asamizu E."/>
            <person name="Kotani H."/>
            <person name="Tabata S."/>
        </authorList>
    </citation>
    <scope>NUCLEOTIDE SEQUENCE [LARGE SCALE GENOMIC DNA]</scope>
    <source>
        <strain>cv. Columbia</strain>
    </source>
</reference>
<reference key="2">
    <citation type="journal article" date="2017" name="Plant J.">
        <title>Araport11: a complete reannotation of the Arabidopsis thaliana reference genome.</title>
        <authorList>
            <person name="Cheng C.Y."/>
            <person name="Krishnakumar V."/>
            <person name="Chan A.P."/>
            <person name="Thibaud-Nissen F."/>
            <person name="Schobel S."/>
            <person name="Town C.D."/>
        </authorList>
    </citation>
    <scope>GENOME REANNOTATION</scope>
    <source>
        <strain>cv. Columbia</strain>
    </source>
</reference>
<reference key="3">
    <citation type="journal article" date="2003" name="Science">
        <title>Empirical analysis of transcriptional activity in the Arabidopsis genome.</title>
        <authorList>
            <person name="Yamada K."/>
            <person name="Lim J."/>
            <person name="Dale J.M."/>
            <person name="Chen H."/>
            <person name="Shinn P."/>
            <person name="Palm C.J."/>
            <person name="Southwick A.M."/>
            <person name="Wu H.C."/>
            <person name="Kim C.J."/>
            <person name="Nguyen M."/>
            <person name="Pham P.K."/>
            <person name="Cheuk R.F."/>
            <person name="Karlin-Newmann G."/>
            <person name="Liu S.X."/>
            <person name="Lam B."/>
            <person name="Sakano H."/>
            <person name="Wu T."/>
            <person name="Yu G."/>
            <person name="Miranda M."/>
            <person name="Quach H.L."/>
            <person name="Tripp M."/>
            <person name="Chang C.H."/>
            <person name="Lee J.M."/>
            <person name="Toriumi M.J."/>
            <person name="Chan M.M."/>
            <person name="Tang C.C."/>
            <person name="Onodera C.S."/>
            <person name="Deng J.M."/>
            <person name="Akiyama K."/>
            <person name="Ansari Y."/>
            <person name="Arakawa T."/>
            <person name="Banh J."/>
            <person name="Banno F."/>
            <person name="Bowser L."/>
            <person name="Brooks S.Y."/>
            <person name="Carninci P."/>
            <person name="Chao Q."/>
            <person name="Choy N."/>
            <person name="Enju A."/>
            <person name="Goldsmith A.D."/>
            <person name="Gurjal M."/>
            <person name="Hansen N.F."/>
            <person name="Hayashizaki Y."/>
            <person name="Johnson-Hopson C."/>
            <person name="Hsuan V.W."/>
            <person name="Iida K."/>
            <person name="Karnes M."/>
            <person name="Khan S."/>
            <person name="Koesema E."/>
            <person name="Ishida J."/>
            <person name="Jiang P.X."/>
            <person name="Jones T."/>
            <person name="Kawai J."/>
            <person name="Kamiya A."/>
            <person name="Meyers C."/>
            <person name="Nakajima M."/>
            <person name="Narusaka M."/>
            <person name="Seki M."/>
            <person name="Sakurai T."/>
            <person name="Satou M."/>
            <person name="Tamse R."/>
            <person name="Vaysberg M."/>
            <person name="Wallender E.K."/>
            <person name="Wong C."/>
            <person name="Yamamura Y."/>
            <person name="Yuan S."/>
            <person name="Shinozaki K."/>
            <person name="Davis R.W."/>
            <person name="Theologis A."/>
            <person name="Ecker J.R."/>
        </authorList>
    </citation>
    <scope>NUCLEOTIDE SEQUENCE [LARGE SCALE MRNA]</scope>
    <source>
        <strain>cv. Columbia</strain>
    </source>
</reference>
<reference key="4">
    <citation type="journal article" date="2008" name="Plant Cell Physiol.">
        <title>The glycerophosphoryl diester phosphodiesterase-like proteins SHV3 and its homologs play important roles in cell wall organization.</title>
        <authorList>
            <person name="Hayashi S."/>
            <person name="Ishii T."/>
            <person name="Matsunaga T."/>
            <person name="Tominaga R."/>
            <person name="Kuromori T."/>
            <person name="Wada T."/>
            <person name="Shinozaki K."/>
            <person name="Hirayama T."/>
        </authorList>
    </citation>
    <scope>TISSUE SPECIFICITY</scope>
</reference>
<reference key="5">
    <citation type="journal article" date="2011" name="Plant J.">
        <title>Characterization of the Arabidopsis glycerophosphodiester phosphodiesterase (GDPD) family reveals a role of the plastid-localized AtGDPD1 in maintaining cellular phosphate homeostasis under phosphate starvation.</title>
        <authorList>
            <person name="Cheng Y."/>
            <person name="Zhou W."/>
            <person name="El Sheery N.I."/>
            <person name="Peters C."/>
            <person name="Li M."/>
            <person name="Wang X."/>
            <person name="Huang J."/>
        </authorList>
    </citation>
    <scope>TISSUE SPECIFICITY</scope>
    <scope>GENE FAMILY</scope>
    <scope>NOMENCLATURE</scope>
</reference>
<keyword id="KW-0319">Glycerol metabolism</keyword>
<keyword id="KW-0325">Glycoprotein</keyword>
<keyword id="KW-0378">Hydrolase</keyword>
<keyword id="KW-0472">Membrane</keyword>
<keyword id="KW-1185">Reference proteome</keyword>
<keyword id="KW-0732">Signal</keyword>
<keyword id="KW-0812">Transmembrane</keyword>
<keyword id="KW-1133">Transmembrane helix</keyword>
<accession>Q9FGT9</accession>
<gene>
    <name evidence="7" type="primary">GDPDL6</name>
    <name evidence="6" type="synonym">GDPL5</name>
    <name evidence="6" type="synonym">SVL4</name>
    <name evidence="9" type="ordered locus">At5g58050</name>
    <name evidence="10" type="ORF">K21L19.4</name>
</gene>
<dbReference type="EC" id="3.1.4.46" evidence="1"/>
<dbReference type="EMBL" id="AB024029">
    <property type="protein sequence ID" value="BAB10996.1"/>
    <property type="molecule type" value="Genomic_DNA"/>
</dbReference>
<dbReference type="EMBL" id="CP002688">
    <property type="protein sequence ID" value="AED96991.1"/>
    <property type="molecule type" value="Genomic_DNA"/>
</dbReference>
<dbReference type="EMBL" id="AY074302">
    <property type="protein sequence ID" value="AAL66999.1"/>
    <property type="molecule type" value="mRNA"/>
</dbReference>
<dbReference type="EMBL" id="BT001948">
    <property type="protein sequence ID" value="AAN71947.1"/>
    <property type="molecule type" value="mRNA"/>
</dbReference>
<dbReference type="RefSeq" id="NP_200613.2">
    <property type="nucleotide sequence ID" value="NM_125190.4"/>
</dbReference>
<dbReference type="SMR" id="Q9FGT9"/>
<dbReference type="BioGRID" id="21161">
    <property type="interactions" value="28"/>
</dbReference>
<dbReference type="FunCoup" id="Q9FGT9">
    <property type="interactions" value="50"/>
</dbReference>
<dbReference type="IntAct" id="Q9FGT9">
    <property type="interactions" value="28"/>
</dbReference>
<dbReference type="STRING" id="3702.Q9FGT9"/>
<dbReference type="GlyCosmos" id="Q9FGT9">
    <property type="glycosylation" value="4 sites, No reported glycans"/>
</dbReference>
<dbReference type="GlyGen" id="Q9FGT9">
    <property type="glycosylation" value="4 sites"/>
</dbReference>
<dbReference type="iPTMnet" id="Q9FGT9"/>
<dbReference type="PaxDb" id="3702-AT5G58050.1"/>
<dbReference type="ProteomicsDB" id="248509"/>
<dbReference type="EnsemblPlants" id="AT5G58050.1">
    <property type="protein sequence ID" value="AT5G58050.1"/>
    <property type="gene ID" value="AT5G58050"/>
</dbReference>
<dbReference type="GeneID" id="835917"/>
<dbReference type="Gramene" id="AT5G58050.1">
    <property type="protein sequence ID" value="AT5G58050.1"/>
    <property type="gene ID" value="AT5G58050"/>
</dbReference>
<dbReference type="KEGG" id="ath:AT5G58050"/>
<dbReference type="Araport" id="AT5G58050"/>
<dbReference type="TAIR" id="AT5G58050">
    <property type="gene designation" value="SVL4"/>
</dbReference>
<dbReference type="eggNOG" id="KOG2258">
    <property type="taxonomic scope" value="Eukaryota"/>
</dbReference>
<dbReference type="HOGENOM" id="CLU_010414_0_1_1"/>
<dbReference type="InParanoid" id="Q9FGT9"/>
<dbReference type="OMA" id="GFDYWAD"/>
<dbReference type="PhylomeDB" id="Q9FGT9"/>
<dbReference type="PRO" id="PR:Q9FGT9"/>
<dbReference type="Proteomes" id="UP000006548">
    <property type="component" value="Chromosome 5"/>
</dbReference>
<dbReference type="ExpressionAtlas" id="Q9FGT9">
    <property type="expression patterns" value="baseline and differential"/>
</dbReference>
<dbReference type="GO" id="GO:0016020">
    <property type="term" value="C:membrane"/>
    <property type="evidence" value="ECO:0007669"/>
    <property type="project" value="UniProtKB-SubCell"/>
</dbReference>
<dbReference type="GO" id="GO:0008889">
    <property type="term" value="F:glycerophosphodiester phosphodiesterase activity"/>
    <property type="evidence" value="ECO:0007669"/>
    <property type="project" value="UniProtKB-EC"/>
</dbReference>
<dbReference type="GO" id="GO:0006071">
    <property type="term" value="P:glycerol metabolic process"/>
    <property type="evidence" value="ECO:0007669"/>
    <property type="project" value="UniProtKB-KW"/>
</dbReference>
<dbReference type="GO" id="GO:0006629">
    <property type="term" value="P:lipid metabolic process"/>
    <property type="evidence" value="ECO:0007669"/>
    <property type="project" value="InterPro"/>
</dbReference>
<dbReference type="CDD" id="cd08603">
    <property type="entry name" value="GDPD_SHV3_repeat_1"/>
    <property type="match status" value="1"/>
</dbReference>
<dbReference type="CDD" id="cd08604">
    <property type="entry name" value="GDPD_SHV3_repeat_2"/>
    <property type="match status" value="1"/>
</dbReference>
<dbReference type="FunFam" id="3.20.20.190:FF:000011">
    <property type="entry name" value="Glycerophosphodiester phosphodiesterase GDPDL3"/>
    <property type="match status" value="1"/>
</dbReference>
<dbReference type="FunFam" id="3.20.20.190:FF:000013">
    <property type="entry name" value="Glycerophosphodiester phosphodiesterase GDPDL3"/>
    <property type="match status" value="1"/>
</dbReference>
<dbReference type="Gene3D" id="3.20.20.190">
    <property type="entry name" value="Phosphatidylinositol (PI) phosphodiesterase"/>
    <property type="match status" value="2"/>
</dbReference>
<dbReference type="InterPro" id="IPR030395">
    <property type="entry name" value="GP_PDE_dom"/>
</dbReference>
<dbReference type="InterPro" id="IPR017946">
    <property type="entry name" value="PLC-like_Pdiesterase_TIM-brl"/>
</dbReference>
<dbReference type="PANTHER" id="PTHR43620:SF44">
    <property type="entry name" value="GLYCEROPHOSPHODIESTER PHOSPHODIESTERASE GDPDL6-RELATED"/>
    <property type="match status" value="1"/>
</dbReference>
<dbReference type="PANTHER" id="PTHR43620">
    <property type="entry name" value="GLYCEROPHOSPHORYL DIESTER PHOSPHODIESTERASE"/>
    <property type="match status" value="1"/>
</dbReference>
<dbReference type="Pfam" id="PF03009">
    <property type="entry name" value="GDPD"/>
    <property type="match status" value="2"/>
</dbReference>
<dbReference type="SUPFAM" id="SSF51695">
    <property type="entry name" value="PLC-like phosphodiesterases"/>
    <property type="match status" value="2"/>
</dbReference>
<dbReference type="PROSITE" id="PS51704">
    <property type="entry name" value="GP_PDE"/>
    <property type="match status" value="2"/>
</dbReference>
<comment type="catalytic activity">
    <reaction evidence="1">
        <text>a sn-glycero-3-phosphodiester + H2O = an alcohol + sn-glycerol 3-phosphate + H(+)</text>
        <dbReference type="Rhea" id="RHEA:12969"/>
        <dbReference type="ChEBI" id="CHEBI:15377"/>
        <dbReference type="ChEBI" id="CHEBI:15378"/>
        <dbReference type="ChEBI" id="CHEBI:30879"/>
        <dbReference type="ChEBI" id="CHEBI:57597"/>
        <dbReference type="ChEBI" id="CHEBI:83408"/>
        <dbReference type="EC" id="3.1.4.46"/>
    </reaction>
</comment>
<comment type="subcellular location">
    <subcellularLocation>
        <location evidence="2">Membrane</location>
        <topology evidence="2">Single-pass membrane protein</topology>
    </subcellularLocation>
</comment>
<comment type="tissue specificity">
    <text evidence="5">Expressed in flowers and siliques.</text>
</comment>
<comment type="similarity">
    <text evidence="8">Belongs to the glycerophosphoryl diester phosphodiesterase family.</text>
</comment>
<name>GPDL6_ARATH</name>
<organism>
    <name type="scientific">Arabidopsis thaliana</name>
    <name type="common">Mouse-ear cress</name>
    <dbReference type="NCBI Taxonomy" id="3702"/>
    <lineage>
        <taxon>Eukaryota</taxon>
        <taxon>Viridiplantae</taxon>
        <taxon>Streptophyta</taxon>
        <taxon>Embryophyta</taxon>
        <taxon>Tracheophyta</taxon>
        <taxon>Spermatophyta</taxon>
        <taxon>Magnoliopsida</taxon>
        <taxon>eudicotyledons</taxon>
        <taxon>Gunneridae</taxon>
        <taxon>Pentapetalae</taxon>
        <taxon>rosids</taxon>
        <taxon>malvids</taxon>
        <taxon>Brassicales</taxon>
        <taxon>Brassicaceae</taxon>
        <taxon>Camelineae</taxon>
        <taxon>Arabidopsis</taxon>
    </lineage>
</organism>
<evidence type="ECO:0000250" key="1">
    <source>
        <dbReference type="UniProtKB" id="Q7Y208"/>
    </source>
</evidence>
<evidence type="ECO:0000255" key="2"/>
<evidence type="ECO:0000255" key="3">
    <source>
        <dbReference type="PROSITE-ProRule" id="PRU00498"/>
    </source>
</evidence>
<evidence type="ECO:0000256" key="4">
    <source>
        <dbReference type="SAM" id="MobiDB-lite"/>
    </source>
</evidence>
<evidence type="ECO:0000269" key="5">
    <source>
    </source>
</evidence>
<evidence type="ECO:0000303" key="6">
    <source>
    </source>
</evidence>
<evidence type="ECO:0000303" key="7">
    <source>
    </source>
</evidence>
<evidence type="ECO:0000305" key="8"/>
<evidence type="ECO:0000312" key="9">
    <source>
        <dbReference type="Araport" id="AT5G58050"/>
    </source>
</evidence>
<evidence type="ECO:0000312" key="10">
    <source>
        <dbReference type="EMBL" id="BAB10996.1"/>
    </source>
</evidence>
<sequence length="753" mass="80902">MLRFFILFSLFLHSSVAAPKTPAAAAAVPAKKWLTLNGQEPAVVARGGFSGLFPESSISANDLAIGTSSPGFTMLCNLQMTKDGVGLCLSDIRLDNATTISSVFPKAQKTYKVNGQDLKGWFVIDYDADTIFNKVTLVQNIFSRPSIFDGQMSVSAVEDVLGTKPPKFWLSVQYDAFYMEHKLSPAEYLRSLRFRGINVISSPEIGFLKSIGMDAGRAKTKLIFEFKDPEAVEPTTNKKYSEIQQNLAAIKAFASGVLVPKDYIWPIDSAKYLKPATTFVADAHKAGLEVYASGFANDLRTSFNYSYDPSAEYLQFVDNGQFSVDGVITDFPPTASQSITCFSHQNGNLPKAGHALVITHNGASGDYPGCTDLAYQKAIDDGADIIDCSVQMSKDGIAFCHDAADLSASTTARTTFMSRATSVPEIQPTNGIFSFDLTWAEIQSVKPQIENPFTATGFQRNPANKNAGKFTTLADFLELGKAKAVTGVLINIQNAAYLASKKGLGVVDVVKSALTNSTLDKQSTQKVLIQSDDSSVLSSFEAVPPYTRVLSIDKEIGDAPKTSIEEIKKHADAVNLLRTSLITVSQSFATGKTNVVEEMHKANISVYVSVLRNEYIAIAFDYFSDPTIELATFIAGRGVDGVITEFPATATRYLRSPCSDLNKDQPYAILPADAGALLTVADKEAQLPAIPPNPPLDAKDVIDPPLPPVAKLASNGTEGGPPQTPPRSGTVAIAANLSLSLLAMMALGLLYTA</sequence>
<protein>
    <recommendedName>
        <fullName evidence="8">Glycerophosphodiester phosphodiesterase GDPDL6</fullName>
        <ecNumber evidence="1">3.1.4.46</ecNumber>
    </recommendedName>
    <alternativeName>
        <fullName evidence="7">Glycerophosphodiester phosphodiesterase-like 6</fullName>
        <shortName evidence="7">ATGDPDL6</shortName>
    </alternativeName>
    <alternativeName>
        <fullName evidence="6">Glycerophosphodiesterase-like 5</fullName>
    </alternativeName>
    <alternativeName>
        <fullName evidence="6">Protein SHV3-LIKE 4</fullName>
    </alternativeName>
</protein>
<feature type="signal peptide" evidence="2">
    <location>
        <begin position="1"/>
        <end position="17"/>
    </location>
</feature>
<feature type="chain" id="PRO_0000430616" description="Glycerophosphodiester phosphodiesterase GDPDL6" evidence="2">
    <location>
        <begin position="18"/>
        <end position="753"/>
    </location>
</feature>
<feature type="transmembrane region" description="Helical" evidence="2">
    <location>
        <begin position="731"/>
        <end position="751"/>
    </location>
</feature>
<feature type="domain" description="GP-PDE 1" evidence="2">
    <location>
        <begin position="41"/>
        <end position="339"/>
    </location>
</feature>
<feature type="domain" description="GP-PDE 2" evidence="2">
    <location>
        <begin position="355"/>
        <end position="654"/>
    </location>
</feature>
<feature type="region of interest" description="Disordered" evidence="4">
    <location>
        <begin position="707"/>
        <end position="729"/>
    </location>
</feature>
<feature type="glycosylation site" description="N-linked (GlcNAc...) asparagine" evidence="3">
    <location>
        <position position="304"/>
    </location>
</feature>
<feature type="glycosylation site" description="N-linked (GlcNAc...) asparagine" evidence="3">
    <location>
        <position position="516"/>
    </location>
</feature>
<feature type="glycosylation site" description="N-linked (GlcNAc...) asparagine" evidence="3">
    <location>
        <position position="603"/>
    </location>
</feature>
<feature type="glycosylation site" description="N-linked (GlcNAc...) asparagine" evidence="3">
    <location>
        <position position="715"/>
    </location>
</feature>
<proteinExistence type="evidence at transcript level"/>